<proteinExistence type="inferred from homology"/>
<protein>
    <recommendedName>
        <fullName evidence="1">Small ribosomal subunit protein bS20</fullName>
    </recommendedName>
    <alternativeName>
        <fullName evidence="2">30S ribosomal protein S20</fullName>
    </alternativeName>
</protein>
<keyword id="KW-0687">Ribonucleoprotein</keyword>
<keyword id="KW-0689">Ribosomal protein</keyword>
<keyword id="KW-0694">RNA-binding</keyword>
<keyword id="KW-0699">rRNA-binding</keyword>
<feature type="chain" id="PRO_1000194261" description="Small ribosomal subunit protein bS20">
    <location>
        <begin position="1"/>
        <end position="86"/>
    </location>
</feature>
<dbReference type="EMBL" id="AP011115">
    <property type="protein sequence ID" value="BAH49252.1"/>
    <property type="molecule type" value="Genomic_DNA"/>
</dbReference>
<dbReference type="RefSeq" id="WP_012688238.1">
    <property type="nucleotide sequence ID" value="NC_012522.1"/>
</dbReference>
<dbReference type="SMR" id="C1AUP4"/>
<dbReference type="STRING" id="632772.ROP_10050"/>
<dbReference type="KEGG" id="rop:ROP_10050"/>
<dbReference type="PATRIC" id="fig|632772.20.peg.1071"/>
<dbReference type="HOGENOM" id="CLU_160655_0_1_11"/>
<dbReference type="OrthoDB" id="9807974at2"/>
<dbReference type="Proteomes" id="UP000002212">
    <property type="component" value="Chromosome"/>
</dbReference>
<dbReference type="GO" id="GO:0005829">
    <property type="term" value="C:cytosol"/>
    <property type="evidence" value="ECO:0007669"/>
    <property type="project" value="TreeGrafter"/>
</dbReference>
<dbReference type="GO" id="GO:0015935">
    <property type="term" value="C:small ribosomal subunit"/>
    <property type="evidence" value="ECO:0007669"/>
    <property type="project" value="TreeGrafter"/>
</dbReference>
<dbReference type="GO" id="GO:0070181">
    <property type="term" value="F:small ribosomal subunit rRNA binding"/>
    <property type="evidence" value="ECO:0007669"/>
    <property type="project" value="TreeGrafter"/>
</dbReference>
<dbReference type="GO" id="GO:0003735">
    <property type="term" value="F:structural constituent of ribosome"/>
    <property type="evidence" value="ECO:0007669"/>
    <property type="project" value="InterPro"/>
</dbReference>
<dbReference type="GO" id="GO:0006412">
    <property type="term" value="P:translation"/>
    <property type="evidence" value="ECO:0007669"/>
    <property type="project" value="UniProtKB-UniRule"/>
</dbReference>
<dbReference type="FunFam" id="1.20.58.110:FF:000001">
    <property type="entry name" value="30S ribosomal protein S20"/>
    <property type="match status" value="1"/>
</dbReference>
<dbReference type="Gene3D" id="1.20.58.110">
    <property type="entry name" value="Ribosomal protein S20"/>
    <property type="match status" value="1"/>
</dbReference>
<dbReference type="HAMAP" id="MF_00500">
    <property type="entry name" value="Ribosomal_bS20"/>
    <property type="match status" value="1"/>
</dbReference>
<dbReference type="InterPro" id="IPR002583">
    <property type="entry name" value="Ribosomal_bS20"/>
</dbReference>
<dbReference type="InterPro" id="IPR036510">
    <property type="entry name" value="Ribosomal_bS20_sf"/>
</dbReference>
<dbReference type="NCBIfam" id="TIGR00029">
    <property type="entry name" value="S20"/>
    <property type="match status" value="1"/>
</dbReference>
<dbReference type="PANTHER" id="PTHR33398">
    <property type="entry name" value="30S RIBOSOMAL PROTEIN S20"/>
    <property type="match status" value="1"/>
</dbReference>
<dbReference type="PANTHER" id="PTHR33398:SF1">
    <property type="entry name" value="SMALL RIBOSOMAL SUBUNIT PROTEIN BS20C"/>
    <property type="match status" value="1"/>
</dbReference>
<dbReference type="Pfam" id="PF01649">
    <property type="entry name" value="Ribosomal_S20p"/>
    <property type="match status" value="1"/>
</dbReference>
<dbReference type="SUPFAM" id="SSF46992">
    <property type="entry name" value="Ribosomal protein S20"/>
    <property type="match status" value="1"/>
</dbReference>
<reference key="1">
    <citation type="submission" date="2009-03" db="EMBL/GenBank/DDBJ databases">
        <title>Comparison of the complete genome sequences of Rhodococcus erythropolis PR4 and Rhodococcus opacus B4.</title>
        <authorList>
            <person name="Takarada H."/>
            <person name="Sekine M."/>
            <person name="Hosoyama A."/>
            <person name="Yamada R."/>
            <person name="Fujisawa T."/>
            <person name="Omata S."/>
            <person name="Shimizu A."/>
            <person name="Tsukatani N."/>
            <person name="Tanikawa S."/>
            <person name="Fujita N."/>
            <person name="Harayama S."/>
        </authorList>
    </citation>
    <scope>NUCLEOTIDE SEQUENCE [LARGE SCALE GENOMIC DNA]</scope>
    <source>
        <strain>B4</strain>
    </source>
</reference>
<evidence type="ECO:0000255" key="1">
    <source>
        <dbReference type="HAMAP-Rule" id="MF_00500"/>
    </source>
</evidence>
<evidence type="ECO:0000305" key="2"/>
<gene>
    <name evidence="1" type="primary">rpsT</name>
    <name type="ordered locus">ROP_10050</name>
</gene>
<sequence length="86" mass="9271">MANIKSQVKRIRTNEAARLRNQSVKSSLRTAIRSFREAAAAGDKDKANELLVATSRKLDKAASKGVIHANQAANKKSALAQAVNKI</sequence>
<comment type="function">
    <text evidence="1">Binds directly to 16S ribosomal RNA.</text>
</comment>
<comment type="similarity">
    <text evidence="1">Belongs to the bacterial ribosomal protein bS20 family.</text>
</comment>
<accession>C1AUP4</accession>
<organism>
    <name type="scientific">Rhodococcus opacus (strain B4)</name>
    <dbReference type="NCBI Taxonomy" id="632772"/>
    <lineage>
        <taxon>Bacteria</taxon>
        <taxon>Bacillati</taxon>
        <taxon>Actinomycetota</taxon>
        <taxon>Actinomycetes</taxon>
        <taxon>Mycobacteriales</taxon>
        <taxon>Nocardiaceae</taxon>
        <taxon>Rhodococcus</taxon>
    </lineage>
</organism>
<name>RS20_RHOOB</name>